<keyword id="KW-0963">Cytoplasm</keyword>
<keyword id="KW-0690">Ribosome biogenesis</keyword>
<gene>
    <name evidence="1" type="primary">rimP</name>
    <name type="ordered locus">Mmcs_2079</name>
</gene>
<evidence type="ECO:0000255" key="1">
    <source>
        <dbReference type="HAMAP-Rule" id="MF_01077"/>
    </source>
</evidence>
<proteinExistence type="inferred from homology"/>
<name>RIMP_MYCSS</name>
<protein>
    <recommendedName>
        <fullName evidence="1">Ribosome maturation factor RimP</fullName>
    </recommendedName>
</protein>
<dbReference type="EMBL" id="CP000384">
    <property type="protein sequence ID" value="ABG08187.1"/>
    <property type="molecule type" value="Genomic_DNA"/>
</dbReference>
<dbReference type="SMR" id="Q1BA97"/>
<dbReference type="KEGG" id="mmc:Mmcs_2079"/>
<dbReference type="HOGENOM" id="CLU_070525_3_0_11"/>
<dbReference type="BioCyc" id="MSP164756:G1G6O-2125-MONOMER"/>
<dbReference type="GO" id="GO:0005829">
    <property type="term" value="C:cytosol"/>
    <property type="evidence" value="ECO:0007669"/>
    <property type="project" value="TreeGrafter"/>
</dbReference>
<dbReference type="GO" id="GO:0000028">
    <property type="term" value="P:ribosomal small subunit assembly"/>
    <property type="evidence" value="ECO:0007669"/>
    <property type="project" value="TreeGrafter"/>
</dbReference>
<dbReference type="GO" id="GO:0006412">
    <property type="term" value="P:translation"/>
    <property type="evidence" value="ECO:0007669"/>
    <property type="project" value="TreeGrafter"/>
</dbReference>
<dbReference type="CDD" id="cd01734">
    <property type="entry name" value="YlxS_C"/>
    <property type="match status" value="1"/>
</dbReference>
<dbReference type="Gene3D" id="3.30.300.70">
    <property type="entry name" value="RimP-like superfamily, N-terminal"/>
    <property type="match status" value="1"/>
</dbReference>
<dbReference type="HAMAP" id="MF_01077">
    <property type="entry name" value="RimP"/>
    <property type="match status" value="1"/>
</dbReference>
<dbReference type="InterPro" id="IPR003728">
    <property type="entry name" value="Ribosome_maturation_RimP"/>
</dbReference>
<dbReference type="InterPro" id="IPR028998">
    <property type="entry name" value="RimP_C"/>
</dbReference>
<dbReference type="InterPro" id="IPR028989">
    <property type="entry name" value="RimP_N"/>
</dbReference>
<dbReference type="InterPro" id="IPR035956">
    <property type="entry name" value="RimP_N_sf"/>
</dbReference>
<dbReference type="NCBIfam" id="NF000930">
    <property type="entry name" value="PRK00092.2-2"/>
    <property type="match status" value="1"/>
</dbReference>
<dbReference type="PANTHER" id="PTHR33867">
    <property type="entry name" value="RIBOSOME MATURATION FACTOR RIMP"/>
    <property type="match status" value="1"/>
</dbReference>
<dbReference type="PANTHER" id="PTHR33867:SF1">
    <property type="entry name" value="RIBOSOME MATURATION FACTOR RIMP"/>
    <property type="match status" value="1"/>
</dbReference>
<dbReference type="Pfam" id="PF17384">
    <property type="entry name" value="DUF150_C"/>
    <property type="match status" value="1"/>
</dbReference>
<dbReference type="Pfam" id="PF02576">
    <property type="entry name" value="RimP_N"/>
    <property type="match status" value="1"/>
</dbReference>
<dbReference type="SUPFAM" id="SSF75420">
    <property type="entry name" value="YhbC-like, N-terminal domain"/>
    <property type="match status" value="1"/>
</dbReference>
<feature type="chain" id="PRO_0000384713" description="Ribosome maturation factor RimP">
    <location>
        <begin position="1"/>
        <end position="192"/>
    </location>
</feature>
<comment type="function">
    <text evidence="1">Required for maturation of 30S ribosomal subunits.</text>
</comment>
<comment type="subcellular location">
    <subcellularLocation>
        <location evidence="1">Cytoplasm</location>
    </subcellularLocation>
</comment>
<comment type="similarity">
    <text evidence="1">Belongs to the RimP family.</text>
</comment>
<accession>Q1BA97</accession>
<reference key="1">
    <citation type="submission" date="2006-06" db="EMBL/GenBank/DDBJ databases">
        <title>Complete sequence of chromosome of Mycobacterium sp. MCS.</title>
        <authorList>
            <consortium name="US DOE Joint Genome Institute"/>
            <person name="Copeland A."/>
            <person name="Lucas S."/>
            <person name="Lapidus A."/>
            <person name="Barry K."/>
            <person name="Detter J.C."/>
            <person name="Glavina del Rio T."/>
            <person name="Hammon N."/>
            <person name="Israni S."/>
            <person name="Dalin E."/>
            <person name="Tice H."/>
            <person name="Pitluck S."/>
            <person name="Martinez M."/>
            <person name="Schmutz J."/>
            <person name="Larimer F."/>
            <person name="Land M."/>
            <person name="Hauser L."/>
            <person name="Kyrpides N."/>
            <person name="Kim E."/>
            <person name="Miller C.D."/>
            <person name="Hughes J.E."/>
            <person name="Anderson A.J."/>
            <person name="Sims R.C."/>
            <person name="Richardson P."/>
        </authorList>
    </citation>
    <scope>NUCLEOTIDE SEQUENCE [LARGE SCALE GENOMIC DNA]</scope>
    <source>
        <strain>MCS</strain>
    </source>
</reference>
<sequence>MAPEPKLRPTGLPSQEQVKELLDGEFARAGYEIENVVIDGGARPPRITVVVDGDRPLDLDTVASLSRSASEQLDRVDESGPGVTADAATYVLEVTSPGVDRPLTTEKHYRRARGRKVELTLSDGSQLTGRIGALTADGESVSLVVREGARANFSVRELPLEGIVKAVVQVEFSPPSQRELELTGQPREEAGA</sequence>
<organism>
    <name type="scientific">Mycobacterium sp. (strain MCS)</name>
    <dbReference type="NCBI Taxonomy" id="164756"/>
    <lineage>
        <taxon>Bacteria</taxon>
        <taxon>Bacillati</taxon>
        <taxon>Actinomycetota</taxon>
        <taxon>Actinomycetes</taxon>
        <taxon>Mycobacteriales</taxon>
        <taxon>Mycobacteriaceae</taxon>
        <taxon>Mycobacterium</taxon>
    </lineage>
</organism>